<name>SNCAP_MOUSE</name>
<accession>Q99ME3</accession>
<accession>A2BDD1</accession>
<proteinExistence type="evidence at transcript level"/>
<sequence>MEAPEYLDLDEIDFSDDISYSVTSLKTIPALCRRCDSQNEDRSVSSSGWNCGVSTLITNPQKPTGIADVYSKFRPVKRVSPLKHQPETLENNENEDQKNNTVEYQKGGETDQGPQPEELSPEDGVGGLPGKGSEPSQALGELEHYDLDMDEILDVPYIKSSQQLAPLTKVTSEKRILGLCTTINGLSAKTCPIASTENSTPNMTPFCVLSPVKSPHLRKAPTALRDQHKLSTEDSESSPALGKCGPAYESENHSKDFLNKVFSDPHSRKIEKSGPDCKLRSFHLQSSAAGAKTEEPINGMNWTNTQGTEERTEYLKKVRSILNIVNEGQISLLPHLAADNLDKIHDENGNNLLHIAASKGHAECLQHLTSLMGEDCLNERNTEQLTPAGLAIKNGQLECVRWMVSETEAIAELSCSKDFPSLIHYAGCYGQEKILLWLLQFMQEQGISLDEVDREGNSAVHVASQHGYLGCIQTLVEYGANVTMQNHAGEKPSQSAERHGHTLCSRYLVVVETCMSLASQVVKLTKQLKEQTVERVTLQSQLQQLLEAQKSEGKSLPSSPSSPSSPASTKSQWKALDTDEESTGKSKVGAQEGIQVLGSLSVSSRARTKGKDEDSDKILRQLLGKEISENVCTQEKLSLEFQDAQASSRNSKKIPLEKRELKLARLRQLMQRSLSESDTDSNNSEDPKNTPVKRADRPRPQPIVESVENVDSAESLHLMIKKHSLASGRRFPFGMKASKSLDGHSPSPTSESSEPDLDSHGPGLGMTPPTQPSTEATQSSPDSTAAQKVATSPKSALKSPSSKRRTSQNSKLRVTFEEPVVQMEQTGLELNGEKDKDKGRAPQRTSESGEQMKRPFGTFRSIMESLSGNQNNNNNYQPASQLKTCTLPLTSLGRKTADAKGNPVSPASKGKNKAAMYSSCIHLPSNALVEEHLRDYARHNDIKRNATKTYHMKHTAEPEPRE</sequence>
<reference key="1">
    <citation type="journal article" date="2004" name="Genome Res.">
        <title>The status, quality, and expansion of the NIH full-length cDNA project: the Mammalian Gene Collection (MGC).</title>
        <authorList>
            <consortium name="The MGC Project Team"/>
        </authorList>
    </citation>
    <scope>NUCLEOTIDE SEQUENCE [LARGE SCALE MRNA]</scope>
</reference>
<reference key="2">
    <citation type="submission" date="2001-02" db="EMBL/GenBank/DDBJ databases">
        <title>Cloning of the mouse homolog of synphilin-1.</title>
        <authorList>
            <person name="Cookson M.R."/>
            <person name="O'Farrell C.A."/>
            <person name="Vink L."/>
            <person name="Singleton A.B."/>
        </authorList>
    </citation>
    <scope>NUCLEOTIDE SEQUENCE [MRNA] OF 1-915</scope>
    <source>
        <strain>BALB/cJ</strain>
        <tissue>Brain</tissue>
    </source>
</reference>
<comment type="subunit">
    <text evidence="1">Associates with SNCA, RNF19A and PRKN.</text>
</comment>
<comment type="PTM">
    <text evidence="1">Ubiquitinated; mediated by SIAH1 or RNF19A and leading to its subsequent proteasomal degradation.</text>
</comment>
<feature type="chain" id="PRO_0000320071" description="Synphilin-1">
    <location>
        <begin position="1"/>
        <end position="962"/>
    </location>
</feature>
<feature type="repeat" description="ANK 1">
    <location>
        <begin position="348"/>
        <end position="379"/>
    </location>
</feature>
<feature type="repeat" description="ANK 2">
    <location>
        <begin position="383"/>
        <end position="412"/>
    </location>
</feature>
<feature type="repeat" description="ANK 3">
    <location>
        <begin position="418"/>
        <end position="447"/>
    </location>
</feature>
<feature type="repeat" description="ANK 4">
    <location>
        <begin position="455"/>
        <end position="484"/>
    </location>
</feature>
<feature type="repeat" description="ANK 5">
    <location>
        <begin position="602"/>
        <end position="631"/>
    </location>
</feature>
<feature type="repeat" description="ANK 6">
    <location>
        <begin position="698"/>
        <end position="728"/>
    </location>
</feature>
<feature type="region of interest" description="Disordered" evidence="3">
    <location>
        <begin position="80"/>
        <end position="99"/>
    </location>
</feature>
<feature type="region of interest" description="Disordered" evidence="3">
    <location>
        <begin position="104"/>
        <end position="137"/>
    </location>
</feature>
<feature type="region of interest" description="Disordered" evidence="3">
    <location>
        <begin position="222"/>
        <end position="249"/>
    </location>
</feature>
<feature type="region of interest" description="Disordered" evidence="3">
    <location>
        <begin position="548"/>
        <end position="590"/>
    </location>
</feature>
<feature type="region of interest" description="Disordered" evidence="3">
    <location>
        <begin position="667"/>
        <end position="852"/>
    </location>
</feature>
<feature type="coiled-coil region" evidence="2">
    <location>
        <begin position="522"/>
        <end position="548"/>
    </location>
</feature>
<feature type="compositionally biased region" description="Low complexity" evidence="3">
    <location>
        <begin position="554"/>
        <end position="571"/>
    </location>
</feature>
<feature type="compositionally biased region" description="Low complexity" evidence="3">
    <location>
        <begin position="667"/>
        <end position="684"/>
    </location>
</feature>
<feature type="compositionally biased region" description="Basic and acidic residues" evidence="3">
    <location>
        <begin position="685"/>
        <end position="699"/>
    </location>
</feature>
<feature type="compositionally biased region" description="Polar residues" evidence="3">
    <location>
        <begin position="772"/>
        <end position="790"/>
    </location>
</feature>
<feature type="compositionally biased region" description="Basic and acidic residues" evidence="3">
    <location>
        <begin position="831"/>
        <end position="840"/>
    </location>
</feature>
<feature type="sequence conflict" description="In Ref. 1; AAK30156." evidence="4" ref="1">
    <original>R</original>
    <variation>G</variation>
    <location>
        <position position="805"/>
    </location>
</feature>
<organism>
    <name type="scientific">Mus musculus</name>
    <name type="common">Mouse</name>
    <dbReference type="NCBI Taxonomy" id="10090"/>
    <lineage>
        <taxon>Eukaryota</taxon>
        <taxon>Metazoa</taxon>
        <taxon>Chordata</taxon>
        <taxon>Craniata</taxon>
        <taxon>Vertebrata</taxon>
        <taxon>Euteleostomi</taxon>
        <taxon>Mammalia</taxon>
        <taxon>Eutheria</taxon>
        <taxon>Euarchontoglires</taxon>
        <taxon>Glires</taxon>
        <taxon>Rodentia</taxon>
        <taxon>Myomorpha</taxon>
        <taxon>Muroidea</taxon>
        <taxon>Muridae</taxon>
        <taxon>Murinae</taxon>
        <taxon>Mus</taxon>
        <taxon>Mus</taxon>
    </lineage>
</organism>
<dbReference type="EMBL" id="BC130225">
    <property type="protein sequence ID" value="AAI30226.1"/>
    <property type="molecule type" value="mRNA"/>
</dbReference>
<dbReference type="EMBL" id="AF348447">
    <property type="protein sequence ID" value="AAK30156.1"/>
    <property type="molecule type" value="mRNA"/>
</dbReference>
<dbReference type="RefSeq" id="NP_001186080.1">
    <property type="nucleotide sequence ID" value="NM_001199151.1"/>
</dbReference>
<dbReference type="RefSeq" id="NP_001186082.1">
    <property type="nucleotide sequence ID" value="NM_001199153.1"/>
</dbReference>
<dbReference type="SMR" id="Q99ME3"/>
<dbReference type="BioGRID" id="212477">
    <property type="interactions" value="2"/>
</dbReference>
<dbReference type="FunCoup" id="Q99ME3">
    <property type="interactions" value="1058"/>
</dbReference>
<dbReference type="IntAct" id="Q99ME3">
    <property type="interactions" value="3"/>
</dbReference>
<dbReference type="MINT" id="Q99ME3"/>
<dbReference type="STRING" id="10090.ENSMUSP00000137367"/>
<dbReference type="iPTMnet" id="Q99ME3"/>
<dbReference type="PhosphoSitePlus" id="Q99ME3"/>
<dbReference type="PaxDb" id="10090-ENSMUSP00000137549"/>
<dbReference type="ProteomicsDB" id="257534"/>
<dbReference type="DNASU" id="67847"/>
<dbReference type="GeneID" id="67847"/>
<dbReference type="KEGG" id="mmu:67847"/>
<dbReference type="UCSC" id="uc008exm.2">
    <property type="organism name" value="mouse"/>
</dbReference>
<dbReference type="AGR" id="MGI:1915097"/>
<dbReference type="CTD" id="9627"/>
<dbReference type="MGI" id="MGI:1915097">
    <property type="gene designation" value="Sncaip"/>
</dbReference>
<dbReference type="eggNOG" id="KOG0504">
    <property type="taxonomic scope" value="Eukaryota"/>
</dbReference>
<dbReference type="InParanoid" id="Q99ME3"/>
<dbReference type="OrthoDB" id="10057496at2759"/>
<dbReference type="BioGRID-ORCS" id="67847">
    <property type="hits" value="1 hit in 78 CRISPR screens"/>
</dbReference>
<dbReference type="ChiTaRS" id="Sncaip">
    <property type="organism name" value="mouse"/>
</dbReference>
<dbReference type="PRO" id="PR:Q99ME3"/>
<dbReference type="Proteomes" id="UP000000589">
    <property type="component" value="Unplaced"/>
</dbReference>
<dbReference type="RNAct" id="Q99ME3">
    <property type="molecule type" value="protein"/>
</dbReference>
<dbReference type="GO" id="GO:0005737">
    <property type="term" value="C:cytoplasm"/>
    <property type="evidence" value="ECO:0000250"/>
    <property type="project" value="ParkinsonsUK-UCL"/>
</dbReference>
<dbReference type="GO" id="GO:0042802">
    <property type="term" value="F:identical protein binding"/>
    <property type="evidence" value="ECO:0000250"/>
    <property type="project" value="ParkinsonsUK-UCL"/>
</dbReference>
<dbReference type="GO" id="GO:0031625">
    <property type="term" value="F:ubiquitin protein ligase binding"/>
    <property type="evidence" value="ECO:0000250"/>
    <property type="project" value="ParkinsonsUK-UCL"/>
</dbReference>
<dbReference type="GO" id="GO:0042417">
    <property type="term" value="P:dopamine metabolic process"/>
    <property type="evidence" value="ECO:0000250"/>
    <property type="project" value="ParkinsonsUK-UCL"/>
</dbReference>
<dbReference type="GO" id="GO:0090083">
    <property type="term" value="P:regulation of inclusion body assembly"/>
    <property type="evidence" value="ECO:0000250"/>
    <property type="project" value="ParkinsonsUK-UCL"/>
</dbReference>
<dbReference type="GO" id="GO:0046928">
    <property type="term" value="P:regulation of neurotransmitter secretion"/>
    <property type="evidence" value="ECO:0000250"/>
    <property type="project" value="ParkinsonsUK-UCL"/>
</dbReference>
<dbReference type="FunFam" id="1.25.40.20:FF:000112">
    <property type="entry name" value="synphilin-1 isoform X1"/>
    <property type="match status" value="1"/>
</dbReference>
<dbReference type="Gene3D" id="6.10.250.750">
    <property type="match status" value="1"/>
</dbReference>
<dbReference type="Gene3D" id="1.25.40.20">
    <property type="entry name" value="Ankyrin repeat-containing domain"/>
    <property type="match status" value="1"/>
</dbReference>
<dbReference type="InterPro" id="IPR002110">
    <property type="entry name" value="Ankyrin_rpt"/>
</dbReference>
<dbReference type="InterPro" id="IPR036770">
    <property type="entry name" value="Ankyrin_rpt-contain_sf"/>
</dbReference>
<dbReference type="InterPro" id="IPR040133">
    <property type="entry name" value="SNCAIP"/>
</dbReference>
<dbReference type="InterPro" id="IPR032027">
    <property type="entry name" value="SNCAIP_SNCA-bd"/>
</dbReference>
<dbReference type="PANTHER" id="PTHR22882">
    <property type="entry name" value="SYNPHILIN-1"/>
    <property type="match status" value="1"/>
</dbReference>
<dbReference type="PANTHER" id="PTHR22882:SF3">
    <property type="entry name" value="SYNPHILIN-1"/>
    <property type="match status" value="1"/>
</dbReference>
<dbReference type="Pfam" id="PF12796">
    <property type="entry name" value="Ank_2"/>
    <property type="match status" value="2"/>
</dbReference>
<dbReference type="Pfam" id="PF16700">
    <property type="entry name" value="SNCAIP_SNCA_bd"/>
    <property type="match status" value="1"/>
</dbReference>
<dbReference type="SMART" id="SM00248">
    <property type="entry name" value="ANK"/>
    <property type="match status" value="4"/>
</dbReference>
<dbReference type="SUPFAM" id="SSF48403">
    <property type="entry name" value="Ankyrin repeat"/>
    <property type="match status" value="1"/>
</dbReference>
<dbReference type="PROSITE" id="PS50297">
    <property type="entry name" value="ANK_REP_REGION"/>
    <property type="match status" value="1"/>
</dbReference>
<dbReference type="PROSITE" id="PS50088">
    <property type="entry name" value="ANK_REPEAT"/>
    <property type="match status" value="1"/>
</dbReference>
<keyword id="KW-0040">ANK repeat</keyword>
<keyword id="KW-0175">Coiled coil</keyword>
<keyword id="KW-1185">Reference proteome</keyword>
<keyword id="KW-0677">Repeat</keyword>
<keyword id="KW-0832">Ubl conjugation</keyword>
<evidence type="ECO:0000250" key="1"/>
<evidence type="ECO:0000255" key="2"/>
<evidence type="ECO:0000256" key="3">
    <source>
        <dbReference type="SAM" id="MobiDB-lite"/>
    </source>
</evidence>
<evidence type="ECO:0000305" key="4"/>
<protein>
    <recommendedName>
        <fullName>Synphilin-1</fullName>
    </recommendedName>
    <alternativeName>
        <fullName>Alpha-synuclein-interacting protein</fullName>
    </alternativeName>
</protein>
<gene>
    <name type="primary">Sncaip</name>
</gene>